<comment type="function">
    <text evidence="1">Involved in chromosome condensation, segregation and cell cycle progression. May participate in facilitating chromosome segregation by condensation DNA from both sides of a centrally located replisome during cell division. Not required for mini-F plasmid partitioning. Probably acts via its interaction with MukB and MukE. Overexpression results in anucleate cells. It has a calcium binding activity.</text>
</comment>
<comment type="subunit">
    <text evidence="1">Interacts, and probably forms a ternary complex, with MukE and MukB via its C-terminal region. The complex formation is stimulated by calcium or magnesium. It is required for an interaction between MukE and MukB.</text>
</comment>
<comment type="subcellular location">
    <subcellularLocation>
        <location evidence="1">Cytoplasm</location>
        <location evidence="1">Nucleoid</location>
    </subcellularLocation>
    <text evidence="1">Restricted to the nucleoid region.</text>
</comment>
<comment type="similarity">
    <text evidence="1">Belongs to the MukF family.</text>
</comment>
<accession>Q87QW4</accession>
<organism>
    <name type="scientific">Vibrio parahaemolyticus serotype O3:K6 (strain RIMD 2210633)</name>
    <dbReference type="NCBI Taxonomy" id="223926"/>
    <lineage>
        <taxon>Bacteria</taxon>
        <taxon>Pseudomonadati</taxon>
        <taxon>Pseudomonadota</taxon>
        <taxon>Gammaproteobacteria</taxon>
        <taxon>Vibrionales</taxon>
        <taxon>Vibrionaceae</taxon>
        <taxon>Vibrio</taxon>
    </lineage>
</organism>
<evidence type="ECO:0000255" key="1">
    <source>
        <dbReference type="HAMAP-Rule" id="MF_01803"/>
    </source>
</evidence>
<feature type="chain" id="PRO_0000211613" description="Chromosome partition protein MukF">
    <location>
        <begin position="1"/>
        <end position="445"/>
    </location>
</feature>
<feature type="region of interest" description="Leucine-zipper">
    <location>
        <begin position="213"/>
        <end position="241"/>
    </location>
</feature>
<sequence length="445" mass="51186">MSEMTLNAAEQPIDELVGWVKQHDFSLNLTTERLAFLIAIAVLSNERFDEELGEGELHDAFAIVTRLFDETGEASAFRANNAINEMVKQRLISRFVSEITDGASIYRLSPLAIGITDYYVRHREFSRLRLSIQLSMVADEMAKAIEAAQKGGTPGHWKKNVYGVLKYSVGEIFDQIDLNQRVMDEQQQSVKQQIADLLNKDWREAINNCEALLSETSSTLRELQDTLQAASDELQTQILDIQEIVYGDPELEFIEEALFGLQMKLDRITSWGQQAIDLWIGYDRHVHKFIRTAIDMDKNRAFSSRLRQSIKDYFDMPWYLTFADAERLSDLRDEALVLRDDEVTGQVPMEVEYEEFQQVNDELSERIGDMLKAHKEQGTPIDLSVVLRDYLAQHPYTHHFDLARIIVDQAVRLGYSESDYQAIQPDWKAINEFGAKVQANVIDRY</sequence>
<proteinExistence type="inferred from homology"/>
<name>MUKF_VIBPA</name>
<protein>
    <recommendedName>
        <fullName evidence="1">Chromosome partition protein MukF</fullName>
    </recommendedName>
</protein>
<keyword id="KW-0106">Calcium</keyword>
<keyword id="KW-0131">Cell cycle</keyword>
<keyword id="KW-0132">Cell division</keyword>
<keyword id="KW-0159">Chromosome partition</keyword>
<keyword id="KW-0963">Cytoplasm</keyword>
<keyword id="KW-0226">DNA condensation</keyword>
<gene>
    <name evidence="1" type="primary">mukF</name>
    <name type="ordered locus">VP1035</name>
</gene>
<dbReference type="EMBL" id="BA000031">
    <property type="protein sequence ID" value="BAC59298.1"/>
    <property type="molecule type" value="Genomic_DNA"/>
</dbReference>
<dbReference type="RefSeq" id="NP_797414.1">
    <property type="nucleotide sequence ID" value="NC_004603.1"/>
</dbReference>
<dbReference type="RefSeq" id="WP_005483103.1">
    <property type="nucleotide sequence ID" value="NC_004603.1"/>
</dbReference>
<dbReference type="SMR" id="Q87QW4"/>
<dbReference type="GeneID" id="1188539"/>
<dbReference type="KEGG" id="vpa:VP1035"/>
<dbReference type="PATRIC" id="fig|223926.6.peg.981"/>
<dbReference type="eggNOG" id="COG3006">
    <property type="taxonomic scope" value="Bacteria"/>
</dbReference>
<dbReference type="HOGENOM" id="CLU_049853_0_0_6"/>
<dbReference type="Proteomes" id="UP000002493">
    <property type="component" value="Chromosome 1"/>
</dbReference>
<dbReference type="GO" id="GO:0005737">
    <property type="term" value="C:cytoplasm"/>
    <property type="evidence" value="ECO:0007669"/>
    <property type="project" value="UniProtKB-UniRule"/>
</dbReference>
<dbReference type="GO" id="GO:0009295">
    <property type="term" value="C:nucleoid"/>
    <property type="evidence" value="ECO:0007669"/>
    <property type="project" value="UniProtKB-SubCell"/>
</dbReference>
<dbReference type="GO" id="GO:0005509">
    <property type="term" value="F:calcium ion binding"/>
    <property type="evidence" value="ECO:0007669"/>
    <property type="project" value="UniProtKB-UniRule"/>
</dbReference>
<dbReference type="GO" id="GO:0051301">
    <property type="term" value="P:cell division"/>
    <property type="evidence" value="ECO:0007669"/>
    <property type="project" value="UniProtKB-KW"/>
</dbReference>
<dbReference type="GO" id="GO:0030261">
    <property type="term" value="P:chromosome condensation"/>
    <property type="evidence" value="ECO:0007669"/>
    <property type="project" value="UniProtKB-KW"/>
</dbReference>
<dbReference type="GO" id="GO:0007059">
    <property type="term" value="P:chromosome segregation"/>
    <property type="evidence" value="ECO:0007669"/>
    <property type="project" value="UniProtKB-UniRule"/>
</dbReference>
<dbReference type="GO" id="GO:0006260">
    <property type="term" value="P:DNA replication"/>
    <property type="evidence" value="ECO:0007669"/>
    <property type="project" value="UniProtKB-UniRule"/>
</dbReference>
<dbReference type="CDD" id="cd16337">
    <property type="entry name" value="MukF_C"/>
    <property type="match status" value="1"/>
</dbReference>
<dbReference type="CDD" id="cd16335">
    <property type="entry name" value="MukF_N"/>
    <property type="match status" value="1"/>
</dbReference>
<dbReference type="Gene3D" id="1.20.58.590">
    <property type="entry name" value="Chromosome partition protein MukF, middle domain"/>
    <property type="match status" value="1"/>
</dbReference>
<dbReference type="Gene3D" id="1.10.225.40">
    <property type="entry name" value="MukF, C-terminal domain"/>
    <property type="match status" value="1"/>
</dbReference>
<dbReference type="Gene3D" id="1.10.10.10">
    <property type="entry name" value="Winged helix-like DNA-binding domain superfamily/Winged helix DNA-binding domain"/>
    <property type="match status" value="1"/>
</dbReference>
<dbReference type="HAMAP" id="MF_01803">
    <property type="entry name" value="MukF"/>
    <property type="match status" value="1"/>
</dbReference>
<dbReference type="InterPro" id="IPR005582">
    <property type="entry name" value="Chromosome_partition_MukF"/>
</dbReference>
<dbReference type="InterPro" id="IPR033441">
    <property type="entry name" value="MukF_C"/>
</dbReference>
<dbReference type="InterPro" id="IPR038198">
    <property type="entry name" value="MukF_C_sf"/>
</dbReference>
<dbReference type="InterPro" id="IPR033440">
    <property type="entry name" value="MukF_M"/>
</dbReference>
<dbReference type="InterPro" id="IPR036141">
    <property type="entry name" value="MukF_M_sp"/>
</dbReference>
<dbReference type="InterPro" id="IPR033439">
    <property type="entry name" value="MukF_WHTH"/>
</dbReference>
<dbReference type="InterPro" id="IPR036388">
    <property type="entry name" value="WH-like_DNA-bd_sf"/>
</dbReference>
<dbReference type="InterPro" id="IPR036390">
    <property type="entry name" value="WH_DNA-bd_sf"/>
</dbReference>
<dbReference type="NCBIfam" id="NF003615">
    <property type="entry name" value="PRK05260.1"/>
    <property type="match status" value="1"/>
</dbReference>
<dbReference type="Pfam" id="PF03882">
    <property type="entry name" value="KicB"/>
    <property type="match status" value="1"/>
</dbReference>
<dbReference type="Pfam" id="PF17193">
    <property type="entry name" value="MukF_C"/>
    <property type="match status" value="1"/>
</dbReference>
<dbReference type="Pfam" id="PF17192">
    <property type="entry name" value="MukF_M"/>
    <property type="match status" value="1"/>
</dbReference>
<dbReference type="PIRSF" id="PIRSF018282">
    <property type="entry name" value="MukF"/>
    <property type="match status" value="1"/>
</dbReference>
<dbReference type="SUPFAM" id="SSF140570">
    <property type="entry name" value="MukF C-terminal domain-like"/>
    <property type="match status" value="1"/>
</dbReference>
<dbReference type="SUPFAM" id="SSF46785">
    <property type="entry name" value="Winged helix' DNA-binding domain"/>
    <property type="match status" value="1"/>
</dbReference>
<reference key="1">
    <citation type="journal article" date="2003" name="Lancet">
        <title>Genome sequence of Vibrio parahaemolyticus: a pathogenic mechanism distinct from that of V. cholerae.</title>
        <authorList>
            <person name="Makino K."/>
            <person name="Oshima K."/>
            <person name="Kurokawa K."/>
            <person name="Yokoyama K."/>
            <person name="Uda T."/>
            <person name="Tagomori K."/>
            <person name="Iijima Y."/>
            <person name="Najima M."/>
            <person name="Nakano M."/>
            <person name="Yamashita A."/>
            <person name="Kubota Y."/>
            <person name="Kimura S."/>
            <person name="Yasunaga T."/>
            <person name="Honda T."/>
            <person name="Shinagawa H."/>
            <person name="Hattori M."/>
            <person name="Iida T."/>
        </authorList>
    </citation>
    <scope>NUCLEOTIDE SEQUENCE [LARGE SCALE GENOMIC DNA]</scope>
    <source>
        <strain>RIMD 2210633</strain>
    </source>
</reference>